<dbReference type="EC" id="3.1.26.4" evidence="1"/>
<dbReference type="EMBL" id="FM209186">
    <property type="protein sequence ID" value="CAW28239.1"/>
    <property type="molecule type" value="Genomic_DNA"/>
</dbReference>
<dbReference type="RefSeq" id="WP_003087954.1">
    <property type="nucleotide sequence ID" value="NC_011770.1"/>
</dbReference>
<dbReference type="SMR" id="B7VB62"/>
<dbReference type="KEGG" id="pag:PLES_35121"/>
<dbReference type="HOGENOM" id="CLU_030894_6_0_6"/>
<dbReference type="GO" id="GO:0005737">
    <property type="term" value="C:cytoplasm"/>
    <property type="evidence" value="ECO:0007669"/>
    <property type="project" value="UniProtKB-SubCell"/>
</dbReference>
<dbReference type="GO" id="GO:0000287">
    <property type="term" value="F:magnesium ion binding"/>
    <property type="evidence" value="ECO:0007669"/>
    <property type="project" value="UniProtKB-UniRule"/>
</dbReference>
<dbReference type="GO" id="GO:0003676">
    <property type="term" value="F:nucleic acid binding"/>
    <property type="evidence" value="ECO:0007669"/>
    <property type="project" value="InterPro"/>
</dbReference>
<dbReference type="GO" id="GO:0004523">
    <property type="term" value="F:RNA-DNA hybrid ribonuclease activity"/>
    <property type="evidence" value="ECO:0007669"/>
    <property type="project" value="UniProtKB-UniRule"/>
</dbReference>
<dbReference type="GO" id="GO:0043137">
    <property type="term" value="P:DNA replication, removal of RNA primer"/>
    <property type="evidence" value="ECO:0007669"/>
    <property type="project" value="TreeGrafter"/>
</dbReference>
<dbReference type="CDD" id="cd09278">
    <property type="entry name" value="RNase_HI_prokaryote_like"/>
    <property type="match status" value="1"/>
</dbReference>
<dbReference type="FunFam" id="3.30.420.10:FF:000119">
    <property type="entry name" value="Ribonuclease H"/>
    <property type="match status" value="1"/>
</dbReference>
<dbReference type="Gene3D" id="3.30.420.10">
    <property type="entry name" value="Ribonuclease H-like superfamily/Ribonuclease H"/>
    <property type="match status" value="1"/>
</dbReference>
<dbReference type="HAMAP" id="MF_00042">
    <property type="entry name" value="RNase_H"/>
    <property type="match status" value="1"/>
</dbReference>
<dbReference type="InterPro" id="IPR050092">
    <property type="entry name" value="RNase_H"/>
</dbReference>
<dbReference type="InterPro" id="IPR012337">
    <property type="entry name" value="RNaseH-like_sf"/>
</dbReference>
<dbReference type="InterPro" id="IPR002156">
    <property type="entry name" value="RNaseH_domain"/>
</dbReference>
<dbReference type="InterPro" id="IPR036397">
    <property type="entry name" value="RNaseH_sf"/>
</dbReference>
<dbReference type="InterPro" id="IPR022892">
    <property type="entry name" value="RNaseHI"/>
</dbReference>
<dbReference type="NCBIfam" id="NF001236">
    <property type="entry name" value="PRK00203.1"/>
    <property type="match status" value="1"/>
</dbReference>
<dbReference type="PANTHER" id="PTHR10642">
    <property type="entry name" value="RIBONUCLEASE H1"/>
    <property type="match status" value="1"/>
</dbReference>
<dbReference type="PANTHER" id="PTHR10642:SF26">
    <property type="entry name" value="RIBONUCLEASE H1"/>
    <property type="match status" value="1"/>
</dbReference>
<dbReference type="Pfam" id="PF00075">
    <property type="entry name" value="RNase_H"/>
    <property type="match status" value="1"/>
</dbReference>
<dbReference type="SUPFAM" id="SSF53098">
    <property type="entry name" value="Ribonuclease H-like"/>
    <property type="match status" value="1"/>
</dbReference>
<dbReference type="PROSITE" id="PS50879">
    <property type="entry name" value="RNASE_H_1"/>
    <property type="match status" value="1"/>
</dbReference>
<keyword id="KW-0963">Cytoplasm</keyword>
<keyword id="KW-0255">Endonuclease</keyword>
<keyword id="KW-0378">Hydrolase</keyword>
<keyword id="KW-0460">Magnesium</keyword>
<keyword id="KW-0479">Metal-binding</keyword>
<keyword id="KW-0540">Nuclease</keyword>
<sequence length="148" mass="16697">MTDKEQVVIYTDGACKGNPGRGGWGALLLYKGAERELWGGEPDTTNNRMELMAAIQALAALKRSCPIRLITDSEYVMRGITEWLPNWKKRGWKTASKQPVKNADLWQALDEQVARHQVEWQWVRGHTGDPGNERADQLANRGVAELPR</sequence>
<proteinExistence type="inferred from homology"/>
<evidence type="ECO:0000255" key="1">
    <source>
        <dbReference type="HAMAP-Rule" id="MF_00042"/>
    </source>
</evidence>
<evidence type="ECO:0000255" key="2">
    <source>
        <dbReference type="PROSITE-ProRule" id="PRU00408"/>
    </source>
</evidence>
<evidence type="ECO:0000256" key="3">
    <source>
        <dbReference type="SAM" id="MobiDB-lite"/>
    </source>
</evidence>
<accession>B7VB62</accession>
<protein>
    <recommendedName>
        <fullName evidence="1">Ribonuclease H</fullName>
        <shortName evidence="1">RNase H</shortName>
        <ecNumber evidence="1">3.1.26.4</ecNumber>
    </recommendedName>
</protein>
<comment type="function">
    <text evidence="1">Endonuclease that specifically degrades the RNA of RNA-DNA hybrids.</text>
</comment>
<comment type="catalytic activity">
    <reaction evidence="1">
        <text>Endonucleolytic cleavage to 5'-phosphomonoester.</text>
        <dbReference type="EC" id="3.1.26.4"/>
    </reaction>
</comment>
<comment type="cofactor">
    <cofactor evidence="1">
        <name>Mg(2+)</name>
        <dbReference type="ChEBI" id="CHEBI:18420"/>
    </cofactor>
    <text evidence="1">Binds 1 Mg(2+) ion per subunit. May bind a second metal ion at a regulatory site, or after substrate binding.</text>
</comment>
<comment type="subunit">
    <text evidence="1">Monomer.</text>
</comment>
<comment type="subcellular location">
    <subcellularLocation>
        <location evidence="1">Cytoplasm</location>
    </subcellularLocation>
</comment>
<comment type="similarity">
    <text evidence="1">Belongs to the RNase H family.</text>
</comment>
<gene>
    <name evidence="1" type="primary">rnhA</name>
    <name type="ordered locus">PLES_35121</name>
</gene>
<feature type="chain" id="PRO_1000116583" description="Ribonuclease H">
    <location>
        <begin position="1"/>
        <end position="148"/>
    </location>
</feature>
<feature type="domain" description="RNase H type-1" evidence="2">
    <location>
        <begin position="3"/>
        <end position="144"/>
    </location>
</feature>
<feature type="region of interest" description="Disordered" evidence="3">
    <location>
        <begin position="125"/>
        <end position="148"/>
    </location>
</feature>
<feature type="binding site" evidence="1">
    <location>
        <position position="12"/>
    </location>
    <ligand>
        <name>Mg(2+)</name>
        <dbReference type="ChEBI" id="CHEBI:18420"/>
        <label>1</label>
    </ligand>
</feature>
<feature type="binding site" evidence="1">
    <location>
        <position position="12"/>
    </location>
    <ligand>
        <name>Mg(2+)</name>
        <dbReference type="ChEBI" id="CHEBI:18420"/>
        <label>2</label>
    </ligand>
</feature>
<feature type="binding site" evidence="1">
    <location>
        <position position="50"/>
    </location>
    <ligand>
        <name>Mg(2+)</name>
        <dbReference type="ChEBI" id="CHEBI:18420"/>
        <label>1</label>
    </ligand>
</feature>
<feature type="binding site" evidence="1">
    <location>
        <position position="72"/>
    </location>
    <ligand>
        <name>Mg(2+)</name>
        <dbReference type="ChEBI" id="CHEBI:18420"/>
        <label>1</label>
    </ligand>
</feature>
<feature type="binding site" evidence="1">
    <location>
        <position position="136"/>
    </location>
    <ligand>
        <name>Mg(2+)</name>
        <dbReference type="ChEBI" id="CHEBI:18420"/>
        <label>2</label>
    </ligand>
</feature>
<reference key="1">
    <citation type="journal article" date="2009" name="Genome Res.">
        <title>Newly introduced genomic prophage islands are critical determinants of in vivo competitiveness in the Liverpool epidemic strain of Pseudomonas aeruginosa.</title>
        <authorList>
            <person name="Winstanley C."/>
            <person name="Langille M.G.I."/>
            <person name="Fothergill J.L."/>
            <person name="Kukavica-Ibrulj I."/>
            <person name="Paradis-Bleau C."/>
            <person name="Sanschagrin F."/>
            <person name="Thomson N.R."/>
            <person name="Winsor G.L."/>
            <person name="Quail M.A."/>
            <person name="Lennard N."/>
            <person name="Bignell A."/>
            <person name="Clarke L."/>
            <person name="Seeger K."/>
            <person name="Saunders D."/>
            <person name="Harris D."/>
            <person name="Parkhill J."/>
            <person name="Hancock R.E.W."/>
            <person name="Brinkman F.S.L."/>
            <person name="Levesque R.C."/>
        </authorList>
    </citation>
    <scope>NUCLEOTIDE SEQUENCE [LARGE SCALE GENOMIC DNA]</scope>
    <source>
        <strain>LESB58</strain>
    </source>
</reference>
<name>RNH_PSEA8</name>
<organism>
    <name type="scientific">Pseudomonas aeruginosa (strain LESB58)</name>
    <dbReference type="NCBI Taxonomy" id="557722"/>
    <lineage>
        <taxon>Bacteria</taxon>
        <taxon>Pseudomonadati</taxon>
        <taxon>Pseudomonadota</taxon>
        <taxon>Gammaproteobacteria</taxon>
        <taxon>Pseudomonadales</taxon>
        <taxon>Pseudomonadaceae</taxon>
        <taxon>Pseudomonas</taxon>
    </lineage>
</organism>